<feature type="chain" id="PRO_1000065198" description="Regulatory protein RecX">
    <location>
        <begin position="1"/>
        <end position="156"/>
    </location>
</feature>
<protein>
    <recommendedName>
        <fullName evidence="1">Regulatory protein RecX</fullName>
    </recommendedName>
</protein>
<gene>
    <name evidence="1" type="primary">recX</name>
    <name type="ordered locus">Pput_4087</name>
</gene>
<accession>A5W7V1</accession>
<proteinExistence type="inferred from homology"/>
<keyword id="KW-0963">Cytoplasm</keyword>
<name>RECX_PSEP1</name>
<reference key="1">
    <citation type="submission" date="2007-05" db="EMBL/GenBank/DDBJ databases">
        <title>Complete sequence of Pseudomonas putida F1.</title>
        <authorList>
            <consortium name="US DOE Joint Genome Institute"/>
            <person name="Copeland A."/>
            <person name="Lucas S."/>
            <person name="Lapidus A."/>
            <person name="Barry K."/>
            <person name="Detter J.C."/>
            <person name="Glavina del Rio T."/>
            <person name="Hammon N."/>
            <person name="Israni S."/>
            <person name="Dalin E."/>
            <person name="Tice H."/>
            <person name="Pitluck S."/>
            <person name="Chain P."/>
            <person name="Malfatti S."/>
            <person name="Shin M."/>
            <person name="Vergez L."/>
            <person name="Schmutz J."/>
            <person name="Larimer F."/>
            <person name="Land M."/>
            <person name="Hauser L."/>
            <person name="Kyrpides N."/>
            <person name="Lykidis A."/>
            <person name="Parales R."/>
            <person name="Richardson P."/>
        </authorList>
    </citation>
    <scope>NUCLEOTIDE SEQUENCE [LARGE SCALE GENOMIC DNA]</scope>
    <source>
        <strain>ATCC 700007 / DSM 6899 / JCM 31910 / BCRC 17059 / LMG 24140 / F1</strain>
    </source>
</reference>
<dbReference type="EMBL" id="CP000712">
    <property type="protein sequence ID" value="ABQ80211.1"/>
    <property type="molecule type" value="Genomic_DNA"/>
</dbReference>
<dbReference type="SMR" id="A5W7V1"/>
<dbReference type="KEGG" id="ppf:Pput_4087"/>
<dbReference type="eggNOG" id="COG2137">
    <property type="taxonomic scope" value="Bacteria"/>
</dbReference>
<dbReference type="HOGENOM" id="CLU_066607_3_2_6"/>
<dbReference type="GO" id="GO:0005737">
    <property type="term" value="C:cytoplasm"/>
    <property type="evidence" value="ECO:0007669"/>
    <property type="project" value="UniProtKB-SubCell"/>
</dbReference>
<dbReference type="GO" id="GO:0006282">
    <property type="term" value="P:regulation of DNA repair"/>
    <property type="evidence" value="ECO:0007669"/>
    <property type="project" value="UniProtKB-UniRule"/>
</dbReference>
<dbReference type="Gene3D" id="1.10.10.10">
    <property type="entry name" value="Winged helix-like DNA-binding domain superfamily/Winged helix DNA-binding domain"/>
    <property type="match status" value="3"/>
</dbReference>
<dbReference type="HAMAP" id="MF_01114">
    <property type="entry name" value="RecX"/>
    <property type="match status" value="1"/>
</dbReference>
<dbReference type="InterPro" id="IPR053926">
    <property type="entry name" value="RecX_HTH_1st"/>
</dbReference>
<dbReference type="InterPro" id="IPR053924">
    <property type="entry name" value="RecX_HTH_2nd"/>
</dbReference>
<dbReference type="InterPro" id="IPR053925">
    <property type="entry name" value="RecX_HTH_3rd"/>
</dbReference>
<dbReference type="InterPro" id="IPR003783">
    <property type="entry name" value="Regulatory_RecX"/>
</dbReference>
<dbReference type="InterPro" id="IPR036388">
    <property type="entry name" value="WH-like_DNA-bd_sf"/>
</dbReference>
<dbReference type="NCBIfam" id="NF001054">
    <property type="entry name" value="PRK00117.2-1"/>
    <property type="match status" value="1"/>
</dbReference>
<dbReference type="PANTHER" id="PTHR33602">
    <property type="entry name" value="REGULATORY PROTEIN RECX FAMILY PROTEIN"/>
    <property type="match status" value="1"/>
</dbReference>
<dbReference type="PANTHER" id="PTHR33602:SF1">
    <property type="entry name" value="REGULATORY PROTEIN RECX FAMILY PROTEIN"/>
    <property type="match status" value="1"/>
</dbReference>
<dbReference type="Pfam" id="PF21982">
    <property type="entry name" value="RecX_HTH1"/>
    <property type="match status" value="1"/>
</dbReference>
<dbReference type="Pfam" id="PF02631">
    <property type="entry name" value="RecX_HTH2"/>
    <property type="match status" value="1"/>
</dbReference>
<dbReference type="Pfam" id="PF21981">
    <property type="entry name" value="RecX_HTH3"/>
    <property type="match status" value="1"/>
</dbReference>
<comment type="function">
    <text evidence="1">Modulates RecA activity.</text>
</comment>
<comment type="subcellular location">
    <subcellularLocation>
        <location evidence="1">Cytoplasm</location>
    </subcellularLocation>
</comment>
<comment type="similarity">
    <text evidence="1">Belongs to the RecX family.</text>
</comment>
<organism>
    <name type="scientific">Pseudomonas putida (strain ATCC 700007 / DSM 6899 / JCM 31910 / BCRC 17059 / LMG 24140 / F1)</name>
    <dbReference type="NCBI Taxonomy" id="351746"/>
    <lineage>
        <taxon>Bacteria</taxon>
        <taxon>Pseudomonadati</taxon>
        <taxon>Pseudomonadota</taxon>
        <taxon>Gammaproteobacteria</taxon>
        <taxon>Pseudomonadales</taxon>
        <taxon>Pseudomonadaceae</taxon>
        <taxon>Pseudomonas</taxon>
    </lineage>
</organism>
<sequence>MSAVLDTPVAIRRTAMDLLARREHGRVELTRKLRQRGASDELIEPELDRLAEEGLLSEARYLESFIRYRSGSGYGPARIREELCQRGLARADIDQALRESEVNWGERMRDVWQRKFAGQRPQDPRSRAQQTRFLAYRGFPMDMIGRLLSGRDLDDY</sequence>
<evidence type="ECO:0000255" key="1">
    <source>
        <dbReference type="HAMAP-Rule" id="MF_01114"/>
    </source>
</evidence>